<reference key="1">
    <citation type="journal article" date="2011" name="J. Bacteriol.">
        <title>Comparative genomics of 28 Salmonella enterica isolates: evidence for CRISPR-mediated adaptive sublineage evolution.</title>
        <authorList>
            <person name="Fricke W.F."/>
            <person name="Mammel M.K."/>
            <person name="McDermott P.F."/>
            <person name="Tartera C."/>
            <person name="White D.G."/>
            <person name="Leclerc J.E."/>
            <person name="Ravel J."/>
            <person name="Cebula T.A."/>
        </authorList>
    </citation>
    <scope>NUCLEOTIDE SEQUENCE [LARGE SCALE GENOMIC DNA]</scope>
    <source>
        <strain>SL483</strain>
    </source>
</reference>
<name>SSRP_SALA4</name>
<keyword id="KW-0963">Cytoplasm</keyword>
<keyword id="KW-0694">RNA-binding</keyword>
<protein>
    <recommendedName>
        <fullName evidence="1">SsrA-binding protein</fullName>
    </recommendedName>
    <alternativeName>
        <fullName evidence="1">Small protein B</fullName>
    </alternativeName>
</protein>
<evidence type="ECO:0000255" key="1">
    <source>
        <dbReference type="HAMAP-Rule" id="MF_00023"/>
    </source>
</evidence>
<feature type="chain" id="PRO_1000090179" description="SsrA-binding protein">
    <location>
        <begin position="1"/>
        <end position="160"/>
    </location>
</feature>
<gene>
    <name evidence="1" type="primary">smpB</name>
    <name type="ordered locus">SeAg_B2833</name>
</gene>
<organism>
    <name type="scientific">Salmonella agona (strain SL483)</name>
    <dbReference type="NCBI Taxonomy" id="454166"/>
    <lineage>
        <taxon>Bacteria</taxon>
        <taxon>Pseudomonadati</taxon>
        <taxon>Pseudomonadota</taxon>
        <taxon>Gammaproteobacteria</taxon>
        <taxon>Enterobacterales</taxon>
        <taxon>Enterobacteriaceae</taxon>
        <taxon>Salmonella</taxon>
    </lineage>
</organism>
<accession>B5F2A0</accession>
<proteinExistence type="inferred from homology"/>
<dbReference type="EMBL" id="CP001138">
    <property type="protein sequence ID" value="ACH49902.1"/>
    <property type="molecule type" value="Genomic_DNA"/>
</dbReference>
<dbReference type="RefSeq" id="WP_001518569.1">
    <property type="nucleotide sequence ID" value="NC_011149.1"/>
</dbReference>
<dbReference type="SMR" id="B5F2A0"/>
<dbReference type="GeneID" id="66757102"/>
<dbReference type="KEGG" id="sea:SeAg_B2833"/>
<dbReference type="HOGENOM" id="CLU_108953_3_0_6"/>
<dbReference type="Proteomes" id="UP000008819">
    <property type="component" value="Chromosome"/>
</dbReference>
<dbReference type="GO" id="GO:0005829">
    <property type="term" value="C:cytosol"/>
    <property type="evidence" value="ECO:0007669"/>
    <property type="project" value="TreeGrafter"/>
</dbReference>
<dbReference type="GO" id="GO:0003723">
    <property type="term" value="F:RNA binding"/>
    <property type="evidence" value="ECO:0007669"/>
    <property type="project" value="UniProtKB-UniRule"/>
</dbReference>
<dbReference type="GO" id="GO:0070929">
    <property type="term" value="P:trans-translation"/>
    <property type="evidence" value="ECO:0007669"/>
    <property type="project" value="UniProtKB-UniRule"/>
</dbReference>
<dbReference type="CDD" id="cd09294">
    <property type="entry name" value="SmpB"/>
    <property type="match status" value="1"/>
</dbReference>
<dbReference type="FunFam" id="2.40.280.10:FF:000001">
    <property type="entry name" value="SsrA-binding protein"/>
    <property type="match status" value="1"/>
</dbReference>
<dbReference type="Gene3D" id="2.40.280.10">
    <property type="match status" value="1"/>
</dbReference>
<dbReference type="HAMAP" id="MF_00023">
    <property type="entry name" value="SmpB"/>
    <property type="match status" value="1"/>
</dbReference>
<dbReference type="InterPro" id="IPR023620">
    <property type="entry name" value="SmpB"/>
</dbReference>
<dbReference type="InterPro" id="IPR000037">
    <property type="entry name" value="SsrA-bd_prot"/>
</dbReference>
<dbReference type="InterPro" id="IPR020081">
    <property type="entry name" value="SsrA-bd_prot_CS"/>
</dbReference>
<dbReference type="NCBIfam" id="NF003843">
    <property type="entry name" value="PRK05422.1"/>
    <property type="match status" value="1"/>
</dbReference>
<dbReference type="NCBIfam" id="TIGR00086">
    <property type="entry name" value="smpB"/>
    <property type="match status" value="1"/>
</dbReference>
<dbReference type="PANTHER" id="PTHR30308:SF2">
    <property type="entry name" value="SSRA-BINDING PROTEIN"/>
    <property type="match status" value="1"/>
</dbReference>
<dbReference type="PANTHER" id="PTHR30308">
    <property type="entry name" value="TMRNA-BINDING COMPONENT OF TRANS-TRANSLATION TAGGING COMPLEX"/>
    <property type="match status" value="1"/>
</dbReference>
<dbReference type="Pfam" id="PF01668">
    <property type="entry name" value="SmpB"/>
    <property type="match status" value="1"/>
</dbReference>
<dbReference type="SUPFAM" id="SSF74982">
    <property type="entry name" value="Small protein B (SmpB)"/>
    <property type="match status" value="1"/>
</dbReference>
<dbReference type="PROSITE" id="PS01317">
    <property type="entry name" value="SSRP"/>
    <property type="match status" value="1"/>
</dbReference>
<sequence>MTKKKAHKPGSATIALNKRARHEYFIEEEFEAGLALQGWEVKSLRAGKANIGDSYVILKDGEAWLFGANFTPMAVASTHVVCDPTRTRKLLLNQRELDSLYGRINREGYTVVALSLYWKNAWCKVKIGVAKGKKQHDKRSDLKEREWQLDKARIMKNAGR</sequence>
<comment type="function">
    <text evidence="1">Required for rescue of stalled ribosomes mediated by trans-translation. Binds to transfer-messenger RNA (tmRNA), required for stable association of tmRNA with ribosomes. tmRNA and SmpB together mimic tRNA shape, replacing the anticodon stem-loop with SmpB. tmRNA is encoded by the ssrA gene; the 2 termini fold to resemble tRNA(Ala) and it encodes a 'tag peptide', a short internal open reading frame. During trans-translation Ala-aminoacylated tmRNA acts like a tRNA, entering the A-site of stalled ribosomes, displacing the stalled mRNA. The ribosome then switches to translate the ORF on the tmRNA; the nascent peptide is terminated with the 'tag peptide' encoded by the tmRNA and targeted for degradation. The ribosome is freed to recommence translation, which seems to be the essential function of trans-translation.</text>
</comment>
<comment type="subcellular location">
    <subcellularLocation>
        <location evidence="1">Cytoplasm</location>
    </subcellularLocation>
    <text evidence="1">The tmRNA-SmpB complex associates with stalled 70S ribosomes.</text>
</comment>
<comment type="similarity">
    <text evidence="1">Belongs to the SmpB family.</text>
</comment>